<protein>
    <recommendedName>
        <fullName>DNA-directed RNA polymerase subunit omega</fullName>
        <shortName>RNAP omega subunit</shortName>
        <ecNumber>2.7.7.6</ecNumber>
    </recommendedName>
    <alternativeName>
        <fullName>RNA polymerase omega subunit</fullName>
    </alternativeName>
    <alternativeName>
        <fullName>Transcriptase subunit omega</fullName>
    </alternativeName>
</protein>
<comment type="function">
    <text evidence="1">Promotes RNA polymerase assembly. Latches the N- and C-terminal regions of the beta' subunit thereby facilitating its interaction with the beta and alpha subunits (By similarity).</text>
</comment>
<comment type="catalytic activity">
    <reaction>
        <text>RNA(n) + a ribonucleoside 5'-triphosphate = RNA(n+1) + diphosphate</text>
        <dbReference type="Rhea" id="RHEA:21248"/>
        <dbReference type="Rhea" id="RHEA-COMP:14527"/>
        <dbReference type="Rhea" id="RHEA-COMP:17342"/>
        <dbReference type="ChEBI" id="CHEBI:33019"/>
        <dbReference type="ChEBI" id="CHEBI:61557"/>
        <dbReference type="ChEBI" id="CHEBI:140395"/>
        <dbReference type="EC" id="2.7.7.6"/>
    </reaction>
</comment>
<comment type="subunit">
    <text evidence="1">The RNAP catalytic core consists of 2 alpha, 1 beta, 1 beta' and 1 omega subunit. When a sigma factor is associated with the core the holoenzyme is formed, which can initiate transcription (By similarity).</text>
</comment>
<comment type="similarity">
    <text evidence="2">Belongs to the RNA polymerase subunit omega family.</text>
</comment>
<sequence>MARITTEDCTGKISNHFDLTLVAARRARQLENGNTPLVDDVRNNKPTVTALREIAAGHIGTELLTRNK</sequence>
<proteinExistence type="inferred from homology"/>
<name>RPOZ_NEIMA</name>
<keyword id="KW-0240">DNA-directed RNA polymerase</keyword>
<keyword id="KW-0548">Nucleotidyltransferase</keyword>
<keyword id="KW-0804">Transcription</keyword>
<keyword id="KW-0808">Transferase</keyword>
<evidence type="ECO:0000250" key="1"/>
<evidence type="ECO:0000305" key="2"/>
<dbReference type="EC" id="2.7.7.6"/>
<dbReference type="EMBL" id="AL157959">
    <property type="protein sequence ID" value="CAM09033.1"/>
    <property type="molecule type" value="Genomic_DNA"/>
</dbReference>
<dbReference type="RefSeq" id="WP_002212665.1">
    <property type="nucleotide sequence ID" value="NC_003116.1"/>
</dbReference>
<dbReference type="SMR" id="P66723"/>
<dbReference type="EnsemblBacteria" id="CAM09033">
    <property type="protein sequence ID" value="CAM09033"/>
    <property type="gene ID" value="NMA1918"/>
</dbReference>
<dbReference type="GeneID" id="93387665"/>
<dbReference type="KEGG" id="nma:NMA1918"/>
<dbReference type="HOGENOM" id="CLU_125406_5_2_4"/>
<dbReference type="Proteomes" id="UP000000626">
    <property type="component" value="Chromosome"/>
</dbReference>
<dbReference type="GO" id="GO:0000428">
    <property type="term" value="C:DNA-directed RNA polymerase complex"/>
    <property type="evidence" value="ECO:0007669"/>
    <property type="project" value="UniProtKB-KW"/>
</dbReference>
<dbReference type="GO" id="GO:0003677">
    <property type="term" value="F:DNA binding"/>
    <property type="evidence" value="ECO:0007669"/>
    <property type="project" value="UniProtKB-UniRule"/>
</dbReference>
<dbReference type="GO" id="GO:0003899">
    <property type="term" value="F:DNA-directed RNA polymerase activity"/>
    <property type="evidence" value="ECO:0007669"/>
    <property type="project" value="UniProtKB-UniRule"/>
</dbReference>
<dbReference type="GO" id="GO:0006351">
    <property type="term" value="P:DNA-templated transcription"/>
    <property type="evidence" value="ECO:0007669"/>
    <property type="project" value="UniProtKB-UniRule"/>
</dbReference>
<dbReference type="Gene3D" id="3.90.940.10">
    <property type="match status" value="1"/>
</dbReference>
<dbReference type="HAMAP" id="MF_00366">
    <property type="entry name" value="RNApol_bact_RpoZ"/>
    <property type="match status" value="1"/>
</dbReference>
<dbReference type="InterPro" id="IPR003716">
    <property type="entry name" value="DNA-dir_RNA_pol_omega"/>
</dbReference>
<dbReference type="InterPro" id="IPR006110">
    <property type="entry name" value="Pol_omega/Rpo6/RPB6"/>
</dbReference>
<dbReference type="InterPro" id="IPR036161">
    <property type="entry name" value="RPB6/omega-like_sf"/>
</dbReference>
<dbReference type="NCBIfam" id="TIGR00690">
    <property type="entry name" value="rpoZ"/>
    <property type="match status" value="1"/>
</dbReference>
<dbReference type="PANTHER" id="PTHR34476">
    <property type="entry name" value="DNA-DIRECTED RNA POLYMERASE SUBUNIT OMEGA"/>
    <property type="match status" value="1"/>
</dbReference>
<dbReference type="PANTHER" id="PTHR34476:SF1">
    <property type="entry name" value="DNA-DIRECTED RNA POLYMERASE SUBUNIT OMEGA"/>
    <property type="match status" value="1"/>
</dbReference>
<dbReference type="Pfam" id="PF01192">
    <property type="entry name" value="RNA_pol_Rpb6"/>
    <property type="match status" value="1"/>
</dbReference>
<dbReference type="SMART" id="SM01409">
    <property type="entry name" value="RNA_pol_Rpb6"/>
    <property type="match status" value="1"/>
</dbReference>
<dbReference type="SUPFAM" id="SSF63562">
    <property type="entry name" value="RPB6/omega subunit-like"/>
    <property type="match status" value="1"/>
</dbReference>
<gene>
    <name type="primary">rpoZ</name>
    <name type="ordered locus">NMA1918</name>
</gene>
<organism>
    <name type="scientific">Neisseria meningitidis serogroup A / serotype 4A (strain DSM 15465 / Z2491)</name>
    <dbReference type="NCBI Taxonomy" id="122587"/>
    <lineage>
        <taxon>Bacteria</taxon>
        <taxon>Pseudomonadati</taxon>
        <taxon>Pseudomonadota</taxon>
        <taxon>Betaproteobacteria</taxon>
        <taxon>Neisseriales</taxon>
        <taxon>Neisseriaceae</taxon>
        <taxon>Neisseria</taxon>
    </lineage>
</organism>
<reference key="1">
    <citation type="journal article" date="2000" name="Nature">
        <title>Complete DNA sequence of a serogroup A strain of Neisseria meningitidis Z2491.</title>
        <authorList>
            <person name="Parkhill J."/>
            <person name="Achtman M."/>
            <person name="James K.D."/>
            <person name="Bentley S.D."/>
            <person name="Churcher C.M."/>
            <person name="Klee S.R."/>
            <person name="Morelli G."/>
            <person name="Basham D."/>
            <person name="Brown D."/>
            <person name="Chillingworth T."/>
            <person name="Davies R.M."/>
            <person name="Davis P."/>
            <person name="Devlin K."/>
            <person name="Feltwell T."/>
            <person name="Hamlin N."/>
            <person name="Holroyd S."/>
            <person name="Jagels K."/>
            <person name="Leather S."/>
            <person name="Moule S."/>
            <person name="Mungall K.L."/>
            <person name="Quail M.A."/>
            <person name="Rajandream M.A."/>
            <person name="Rutherford K.M."/>
            <person name="Simmonds M."/>
            <person name="Skelton J."/>
            <person name="Whitehead S."/>
            <person name="Spratt B.G."/>
            <person name="Barrell B.G."/>
        </authorList>
    </citation>
    <scope>NUCLEOTIDE SEQUENCE [LARGE SCALE GENOMIC DNA]</scope>
    <source>
        <strain>DSM 15465 / Z2491</strain>
    </source>
</reference>
<feature type="chain" id="PRO_0000128954" description="DNA-directed RNA polymerase subunit omega">
    <location>
        <begin position="1"/>
        <end position="68"/>
    </location>
</feature>
<accession>P66723</accession>
<accession>A1ITC0</accession>
<accession>Q9JQS9</accession>